<accession>A9BUG7</accession>
<sequence>MIGKLTGTLLEKNPPEVLVDCGGVGYEVQVPMSTFYNLPASGAKVSLLTHFVVREDAQLLYGFGTHSERQAFRELIKITGIGPRMALSVLSGMSVEDLAQAVTLQEVGRLVKVPGIGKKTAERLLLELKGKIGADTGAQSLFVNNDQNDIVQALMALGYSDKDAAAALKKLPPDVGVTEGIKLALKALAK</sequence>
<gene>
    <name evidence="1" type="primary">ruvA</name>
    <name type="ordered locus">Daci_1226</name>
</gene>
<reference key="1">
    <citation type="submission" date="2007-11" db="EMBL/GenBank/DDBJ databases">
        <title>Complete sequence of Delftia acidovorans DSM 14801 / SPH-1.</title>
        <authorList>
            <person name="Copeland A."/>
            <person name="Lucas S."/>
            <person name="Lapidus A."/>
            <person name="Barry K."/>
            <person name="Glavina del Rio T."/>
            <person name="Dalin E."/>
            <person name="Tice H."/>
            <person name="Pitluck S."/>
            <person name="Lowry S."/>
            <person name="Clum A."/>
            <person name="Schmutz J."/>
            <person name="Larimer F."/>
            <person name="Land M."/>
            <person name="Hauser L."/>
            <person name="Kyrpides N."/>
            <person name="Kim E."/>
            <person name="Schleheck D."/>
            <person name="Richardson P."/>
        </authorList>
    </citation>
    <scope>NUCLEOTIDE SEQUENCE [LARGE SCALE GENOMIC DNA]</scope>
    <source>
        <strain>DSM 14801 / SPH-1</strain>
    </source>
</reference>
<name>RUVA_DELAS</name>
<feature type="chain" id="PRO_1000090311" description="Holliday junction branch migration complex subunit RuvA">
    <location>
        <begin position="1"/>
        <end position="190"/>
    </location>
</feature>
<feature type="region of interest" description="Domain I" evidence="1">
    <location>
        <begin position="1"/>
        <end position="64"/>
    </location>
</feature>
<feature type="region of interest" description="Domain II" evidence="1">
    <location>
        <begin position="65"/>
        <end position="143"/>
    </location>
</feature>
<feature type="region of interest" description="Flexible linker" evidence="1">
    <location>
        <begin position="144"/>
        <end position="148"/>
    </location>
</feature>
<feature type="region of interest" description="Domain III" evidence="1">
    <location>
        <begin position="148"/>
        <end position="190"/>
    </location>
</feature>
<organism>
    <name type="scientific">Delftia acidovorans (strain DSM 14801 / SPH-1)</name>
    <dbReference type="NCBI Taxonomy" id="398578"/>
    <lineage>
        <taxon>Bacteria</taxon>
        <taxon>Pseudomonadati</taxon>
        <taxon>Pseudomonadota</taxon>
        <taxon>Betaproteobacteria</taxon>
        <taxon>Burkholderiales</taxon>
        <taxon>Comamonadaceae</taxon>
        <taxon>Delftia</taxon>
    </lineage>
</organism>
<keyword id="KW-0963">Cytoplasm</keyword>
<keyword id="KW-0227">DNA damage</keyword>
<keyword id="KW-0233">DNA recombination</keyword>
<keyword id="KW-0234">DNA repair</keyword>
<keyword id="KW-0238">DNA-binding</keyword>
<keyword id="KW-1185">Reference proteome</keyword>
<evidence type="ECO:0000255" key="1">
    <source>
        <dbReference type="HAMAP-Rule" id="MF_00031"/>
    </source>
</evidence>
<comment type="function">
    <text evidence="1">The RuvA-RuvB-RuvC complex processes Holliday junction (HJ) DNA during genetic recombination and DNA repair, while the RuvA-RuvB complex plays an important role in the rescue of blocked DNA replication forks via replication fork reversal (RFR). RuvA specifically binds to HJ cruciform DNA, conferring on it an open structure. The RuvB hexamer acts as an ATP-dependent pump, pulling dsDNA into and through the RuvAB complex. HJ branch migration allows RuvC to scan DNA until it finds its consensus sequence, where it cleaves and resolves the cruciform DNA.</text>
</comment>
<comment type="subunit">
    <text evidence="1">Homotetramer. Forms an RuvA(8)-RuvB(12)-Holliday junction (HJ) complex. HJ DNA is sandwiched between 2 RuvA tetramers; dsDNA enters through RuvA and exits via RuvB. An RuvB hexamer assembles on each DNA strand where it exits the tetramer. Each RuvB hexamer is contacted by two RuvA subunits (via domain III) on 2 adjacent RuvB subunits; this complex drives branch migration. In the full resolvosome a probable DNA-RuvA(4)-RuvB(12)-RuvC(2) complex forms which resolves the HJ.</text>
</comment>
<comment type="subcellular location">
    <subcellularLocation>
        <location evidence="1">Cytoplasm</location>
    </subcellularLocation>
</comment>
<comment type="domain">
    <text evidence="1">Has three domains with a flexible linker between the domains II and III and assumes an 'L' shape. Domain III is highly mobile and contacts RuvB.</text>
</comment>
<comment type="similarity">
    <text evidence="1">Belongs to the RuvA family.</text>
</comment>
<proteinExistence type="inferred from homology"/>
<dbReference type="EMBL" id="CP000884">
    <property type="protein sequence ID" value="ABX33870.1"/>
    <property type="molecule type" value="Genomic_DNA"/>
</dbReference>
<dbReference type="RefSeq" id="WP_012203156.1">
    <property type="nucleotide sequence ID" value="NC_010002.1"/>
</dbReference>
<dbReference type="SMR" id="A9BUG7"/>
<dbReference type="STRING" id="398578.Daci_1226"/>
<dbReference type="GeneID" id="24116306"/>
<dbReference type="KEGG" id="dac:Daci_1226"/>
<dbReference type="eggNOG" id="COG0632">
    <property type="taxonomic scope" value="Bacteria"/>
</dbReference>
<dbReference type="HOGENOM" id="CLU_087936_0_0_4"/>
<dbReference type="Proteomes" id="UP000000784">
    <property type="component" value="Chromosome"/>
</dbReference>
<dbReference type="GO" id="GO:0005737">
    <property type="term" value="C:cytoplasm"/>
    <property type="evidence" value="ECO:0007669"/>
    <property type="project" value="UniProtKB-SubCell"/>
</dbReference>
<dbReference type="GO" id="GO:0009379">
    <property type="term" value="C:Holliday junction helicase complex"/>
    <property type="evidence" value="ECO:0007669"/>
    <property type="project" value="InterPro"/>
</dbReference>
<dbReference type="GO" id="GO:0048476">
    <property type="term" value="C:Holliday junction resolvase complex"/>
    <property type="evidence" value="ECO:0007669"/>
    <property type="project" value="UniProtKB-UniRule"/>
</dbReference>
<dbReference type="GO" id="GO:0005524">
    <property type="term" value="F:ATP binding"/>
    <property type="evidence" value="ECO:0007669"/>
    <property type="project" value="InterPro"/>
</dbReference>
<dbReference type="GO" id="GO:0000400">
    <property type="term" value="F:four-way junction DNA binding"/>
    <property type="evidence" value="ECO:0007669"/>
    <property type="project" value="UniProtKB-UniRule"/>
</dbReference>
<dbReference type="GO" id="GO:0009378">
    <property type="term" value="F:four-way junction helicase activity"/>
    <property type="evidence" value="ECO:0007669"/>
    <property type="project" value="InterPro"/>
</dbReference>
<dbReference type="GO" id="GO:0006310">
    <property type="term" value="P:DNA recombination"/>
    <property type="evidence" value="ECO:0007669"/>
    <property type="project" value="UniProtKB-UniRule"/>
</dbReference>
<dbReference type="GO" id="GO:0006281">
    <property type="term" value="P:DNA repair"/>
    <property type="evidence" value="ECO:0007669"/>
    <property type="project" value="UniProtKB-UniRule"/>
</dbReference>
<dbReference type="CDD" id="cd14332">
    <property type="entry name" value="UBA_RuvA_C"/>
    <property type="match status" value="1"/>
</dbReference>
<dbReference type="Gene3D" id="1.10.150.20">
    <property type="entry name" value="5' to 3' exonuclease, C-terminal subdomain"/>
    <property type="match status" value="1"/>
</dbReference>
<dbReference type="Gene3D" id="1.10.8.10">
    <property type="entry name" value="DNA helicase RuvA subunit, C-terminal domain"/>
    <property type="match status" value="1"/>
</dbReference>
<dbReference type="Gene3D" id="2.40.50.140">
    <property type="entry name" value="Nucleic acid-binding proteins"/>
    <property type="match status" value="1"/>
</dbReference>
<dbReference type="HAMAP" id="MF_00031">
    <property type="entry name" value="DNA_HJ_migration_RuvA"/>
    <property type="match status" value="1"/>
</dbReference>
<dbReference type="InterPro" id="IPR013849">
    <property type="entry name" value="DNA_helicase_Holl-junc_RuvA_I"/>
</dbReference>
<dbReference type="InterPro" id="IPR003583">
    <property type="entry name" value="Hlx-hairpin-Hlx_DNA-bd_motif"/>
</dbReference>
<dbReference type="InterPro" id="IPR012340">
    <property type="entry name" value="NA-bd_OB-fold"/>
</dbReference>
<dbReference type="InterPro" id="IPR000085">
    <property type="entry name" value="RuvA"/>
</dbReference>
<dbReference type="InterPro" id="IPR010994">
    <property type="entry name" value="RuvA_2-like"/>
</dbReference>
<dbReference type="InterPro" id="IPR011114">
    <property type="entry name" value="RuvA_C"/>
</dbReference>
<dbReference type="InterPro" id="IPR036267">
    <property type="entry name" value="RuvA_C_sf"/>
</dbReference>
<dbReference type="NCBIfam" id="TIGR00084">
    <property type="entry name" value="ruvA"/>
    <property type="match status" value="1"/>
</dbReference>
<dbReference type="Pfam" id="PF14520">
    <property type="entry name" value="HHH_5"/>
    <property type="match status" value="1"/>
</dbReference>
<dbReference type="Pfam" id="PF07499">
    <property type="entry name" value="RuvA_C"/>
    <property type="match status" value="1"/>
</dbReference>
<dbReference type="Pfam" id="PF01330">
    <property type="entry name" value="RuvA_N"/>
    <property type="match status" value="1"/>
</dbReference>
<dbReference type="SMART" id="SM00278">
    <property type="entry name" value="HhH1"/>
    <property type="match status" value="2"/>
</dbReference>
<dbReference type="SUPFAM" id="SSF46929">
    <property type="entry name" value="DNA helicase RuvA subunit, C-terminal domain"/>
    <property type="match status" value="1"/>
</dbReference>
<dbReference type="SUPFAM" id="SSF50249">
    <property type="entry name" value="Nucleic acid-binding proteins"/>
    <property type="match status" value="1"/>
</dbReference>
<dbReference type="SUPFAM" id="SSF47781">
    <property type="entry name" value="RuvA domain 2-like"/>
    <property type="match status" value="1"/>
</dbReference>
<protein>
    <recommendedName>
        <fullName evidence="1">Holliday junction branch migration complex subunit RuvA</fullName>
    </recommendedName>
</protein>